<sequence>KNMITGATQMDGAILVVSAADGPMPQTREHILLAGQVGVPNIVVFMNKQDQVDDEELLELVELEIRELLSSYDFPGDDIPVTAGSALKAVEQLLSDPNTARGSDEWVDKIHALMDDGDKYIPTPSVKVDKPFLMAVEDVFSITGRGTVATGRIERGLVKVGETVQLVGIADTRETTVTGVEMFQKTLDSGMAGDNVGVLLRGVQKEDIERGMVLAKSGSITPHTEFESEVYVLNK</sequence>
<protein>
    <recommendedName>
        <fullName>Elongation factor Tu</fullName>
        <shortName>EF-Tu</shortName>
        <ecNumber evidence="2">3.6.5.3</ecNumber>
    </recommendedName>
</protein>
<dbReference type="EC" id="3.6.5.3" evidence="2"/>
<dbReference type="EMBL" id="U09444">
    <property type="protein sequence ID" value="AAA87697.1"/>
    <property type="molecule type" value="Genomic_DNA"/>
</dbReference>
<dbReference type="SMR" id="P50066"/>
<dbReference type="GO" id="GO:0005829">
    <property type="term" value="C:cytosol"/>
    <property type="evidence" value="ECO:0007669"/>
    <property type="project" value="TreeGrafter"/>
</dbReference>
<dbReference type="GO" id="GO:0005525">
    <property type="term" value="F:GTP binding"/>
    <property type="evidence" value="ECO:0007669"/>
    <property type="project" value="UniProtKB-KW"/>
</dbReference>
<dbReference type="GO" id="GO:0003924">
    <property type="term" value="F:GTPase activity"/>
    <property type="evidence" value="ECO:0007669"/>
    <property type="project" value="InterPro"/>
</dbReference>
<dbReference type="GO" id="GO:0003746">
    <property type="term" value="F:translation elongation factor activity"/>
    <property type="evidence" value="ECO:0007669"/>
    <property type="project" value="UniProtKB-KW"/>
</dbReference>
<dbReference type="CDD" id="cd03697">
    <property type="entry name" value="EFTU_II"/>
    <property type="match status" value="1"/>
</dbReference>
<dbReference type="FunFam" id="2.40.30.10:FF:000001">
    <property type="entry name" value="Elongation factor Tu"/>
    <property type="match status" value="1"/>
</dbReference>
<dbReference type="Gene3D" id="3.40.50.300">
    <property type="entry name" value="P-loop containing nucleotide triphosphate hydrolases"/>
    <property type="match status" value="1"/>
</dbReference>
<dbReference type="Gene3D" id="2.40.30.10">
    <property type="entry name" value="Translation factors"/>
    <property type="match status" value="1"/>
</dbReference>
<dbReference type="InterPro" id="IPR050055">
    <property type="entry name" value="EF-Tu_GTPase"/>
</dbReference>
<dbReference type="InterPro" id="IPR004161">
    <property type="entry name" value="EFTu-like_2"/>
</dbReference>
<dbReference type="InterPro" id="IPR033720">
    <property type="entry name" value="EFTU_2"/>
</dbReference>
<dbReference type="InterPro" id="IPR027417">
    <property type="entry name" value="P-loop_NTPase"/>
</dbReference>
<dbReference type="InterPro" id="IPR000795">
    <property type="entry name" value="T_Tr_GTP-bd_dom"/>
</dbReference>
<dbReference type="InterPro" id="IPR009000">
    <property type="entry name" value="Transl_B-barrel_sf"/>
</dbReference>
<dbReference type="PANTHER" id="PTHR43721:SF22">
    <property type="entry name" value="ELONGATION FACTOR TU, MITOCHONDRIAL"/>
    <property type="match status" value="1"/>
</dbReference>
<dbReference type="PANTHER" id="PTHR43721">
    <property type="entry name" value="ELONGATION FACTOR TU-RELATED"/>
    <property type="match status" value="1"/>
</dbReference>
<dbReference type="Pfam" id="PF00009">
    <property type="entry name" value="GTP_EFTU"/>
    <property type="match status" value="1"/>
</dbReference>
<dbReference type="Pfam" id="PF03144">
    <property type="entry name" value="GTP_EFTU_D2"/>
    <property type="match status" value="1"/>
</dbReference>
<dbReference type="PRINTS" id="PR00315">
    <property type="entry name" value="ELONGATNFCT"/>
</dbReference>
<dbReference type="SUPFAM" id="SSF52540">
    <property type="entry name" value="P-loop containing nucleoside triphosphate hydrolases"/>
    <property type="match status" value="1"/>
</dbReference>
<dbReference type="SUPFAM" id="SSF50447">
    <property type="entry name" value="Translation proteins"/>
    <property type="match status" value="1"/>
</dbReference>
<dbReference type="PROSITE" id="PS51722">
    <property type="entry name" value="G_TR_2"/>
    <property type="match status" value="1"/>
</dbReference>
<feature type="chain" id="PRO_0000091363" description="Elongation factor Tu">
    <location>
        <begin position="1" status="less than"/>
        <end position="235" status="greater than"/>
    </location>
</feature>
<feature type="domain" description="tr-type G" evidence="3">
    <location>
        <begin position="1" status="less than"/>
        <end position="125"/>
    </location>
</feature>
<feature type="binding site" evidence="1">
    <location>
        <begin position="47"/>
        <end position="50"/>
    </location>
    <ligand>
        <name>GTP</name>
        <dbReference type="ChEBI" id="CHEBI:37565"/>
    </ligand>
</feature>
<feature type="non-terminal residue">
    <location>
        <position position="1"/>
    </location>
</feature>
<feature type="non-terminal residue">
    <location>
        <position position="235"/>
    </location>
</feature>
<evidence type="ECO:0000250" key="1"/>
<evidence type="ECO:0000255" key="2">
    <source>
        <dbReference type="HAMAP-Rule" id="MF_00118"/>
    </source>
</evidence>
<evidence type="ECO:0000255" key="3">
    <source>
        <dbReference type="PROSITE-ProRule" id="PRU01059"/>
    </source>
</evidence>
<keyword id="KW-0963">Cytoplasm</keyword>
<keyword id="KW-0251">Elongation factor</keyword>
<keyword id="KW-0342">GTP-binding</keyword>
<keyword id="KW-0378">Hydrolase</keyword>
<keyword id="KW-0547">Nucleotide-binding</keyword>
<keyword id="KW-0648">Protein biosynthesis</keyword>
<comment type="function">
    <text evidence="2">GTP hydrolase that promotes the GTP-dependent binding of aminoacyl-tRNA to the A-site of ribosomes during protein biosynthesis.</text>
</comment>
<comment type="catalytic activity">
    <reaction evidence="2">
        <text>GTP + H2O = GDP + phosphate + H(+)</text>
        <dbReference type="Rhea" id="RHEA:19669"/>
        <dbReference type="ChEBI" id="CHEBI:15377"/>
        <dbReference type="ChEBI" id="CHEBI:15378"/>
        <dbReference type="ChEBI" id="CHEBI:37565"/>
        <dbReference type="ChEBI" id="CHEBI:43474"/>
        <dbReference type="ChEBI" id="CHEBI:58189"/>
        <dbReference type="EC" id="3.6.5.3"/>
    </reaction>
    <physiologicalReaction direction="left-to-right" evidence="2">
        <dbReference type="Rhea" id="RHEA:19670"/>
    </physiologicalReaction>
</comment>
<comment type="subunit">
    <text evidence="1">Monomer.</text>
</comment>
<comment type="subcellular location">
    <subcellularLocation>
        <location evidence="1">Cytoplasm</location>
    </subcellularLocation>
</comment>
<comment type="similarity">
    <text evidence="3">Belongs to the TRAFAC class translation factor GTPase superfamily. Classic translation factor GTPase family. EF-Tu/EF-1A subfamily.</text>
</comment>
<accession>P50066</accession>
<proteinExistence type="inferred from homology"/>
<organism>
    <name type="scientific">Leptolyngbya boryana</name>
    <name type="common">Plectonema boryanum</name>
    <dbReference type="NCBI Taxonomy" id="1184"/>
    <lineage>
        <taxon>Bacteria</taxon>
        <taxon>Bacillati</taxon>
        <taxon>Cyanobacteriota</taxon>
        <taxon>Cyanophyceae</taxon>
        <taxon>Leptolyngbyales</taxon>
        <taxon>Leptolyngbyaceae</taxon>
        <taxon>Leptolyngbya group</taxon>
        <taxon>Leptolyngbya</taxon>
    </lineage>
</organism>
<name>EFTU_LEPBY</name>
<reference key="1">
    <citation type="journal article" date="1995" name="Mol. Phylogenet. Evol.">
        <title>Phylogenetic analysis of tufA sequences indicates a cyanobacterial origin of all plastids.</title>
        <authorList>
            <person name="Delwiche C.F."/>
            <person name="Kuhsel M."/>
            <person name="Palmer J.D."/>
        </authorList>
    </citation>
    <scope>NUCLEOTIDE SEQUENCE [GENOMIC DNA]</scope>
    <source>
        <strain>ATCC 18200 / UTEX 594 / PCC 73110</strain>
    </source>
</reference>
<gene>
    <name type="primary">tufA</name>
</gene>